<name>RP45C_ARATH</name>
<sequence length="415" mass="44972">MMQQPPPASNGAATGPGQIPSDQQAYLQQQQSWMMQHQQQQQGQPPAGWNQQSAPSSGQPQQQQYGGGGSQNPGSAGEIRSLWIGDLQPWMDENYLMNVFGLTGEATAAKVIRNKQNGYSEGYGFIEFVNHATAERNLQTYNGAPMPSSEQAFRLNWAQLGAGERRQAEGPEHTVFVGDLAPDVTDHMLTETFKAVYSSVKGAKVVNDRTTGRSKGYGFVRFADESEQIRAMTEMNGQYCSSRPMRTGPAANKKPLTMQPASYQNTQGNSGESDPTNTTIFVGAVDQSVTEDDLKSVFGQFGELVHVKIPAGKRCGFVQYANRACAEQALSVLNGTQLGGQSIRLSWGRSPSNKQTQPDQAQYGGGGGYYGYPPQGYEAYGYAPPPQDPNAYYGGYAGGGYGNYQQPGGYQQQQQ</sequence>
<keyword id="KW-0507">mRNA processing</keyword>
<keyword id="KW-0539">Nucleus</keyword>
<keyword id="KW-1185">Reference proteome</keyword>
<keyword id="KW-0677">Repeat</keyword>
<keyword id="KW-0694">RNA-binding</keyword>
<feature type="chain" id="PRO_0000415764" description="Polyadenylate-binding protein RBP45C">
    <location>
        <begin position="1"/>
        <end position="415"/>
    </location>
</feature>
<feature type="domain" description="RRM 1" evidence="2">
    <location>
        <begin position="80"/>
        <end position="160"/>
    </location>
</feature>
<feature type="domain" description="RRM 2" evidence="2">
    <location>
        <begin position="173"/>
        <end position="252"/>
    </location>
</feature>
<feature type="domain" description="RRM 3" evidence="2">
    <location>
        <begin position="278"/>
        <end position="350"/>
    </location>
</feature>
<feature type="region of interest" description="Disordered" evidence="3">
    <location>
        <begin position="1"/>
        <end position="77"/>
    </location>
</feature>
<feature type="region of interest" description="Disordered" evidence="3">
    <location>
        <begin position="344"/>
        <end position="369"/>
    </location>
</feature>
<feature type="compositionally biased region" description="Low complexity" evidence="3">
    <location>
        <begin position="23"/>
        <end position="64"/>
    </location>
</feature>
<feature type="compositionally biased region" description="Polar residues" evidence="3">
    <location>
        <begin position="344"/>
        <end position="356"/>
    </location>
</feature>
<gene>
    <name type="primary">RBP45C</name>
    <name type="ordered locus">At4g27000</name>
    <name type="ORF">F10M23.340</name>
</gene>
<evidence type="ECO:0000250" key="1"/>
<evidence type="ECO:0000255" key="2">
    <source>
        <dbReference type="PROSITE-ProRule" id="PRU00176"/>
    </source>
</evidence>
<evidence type="ECO:0000256" key="3">
    <source>
        <dbReference type="SAM" id="MobiDB-lite"/>
    </source>
</evidence>
<evidence type="ECO:0000269" key="4">
    <source>
    </source>
</evidence>
<evidence type="ECO:0000305" key="5"/>
<reference key="1">
    <citation type="journal article" date="1999" name="Nature">
        <title>Sequence and analysis of chromosome 4 of the plant Arabidopsis thaliana.</title>
        <authorList>
            <person name="Mayer K.F.X."/>
            <person name="Schueller C."/>
            <person name="Wambutt R."/>
            <person name="Murphy G."/>
            <person name="Volckaert G."/>
            <person name="Pohl T."/>
            <person name="Duesterhoeft A."/>
            <person name="Stiekema W."/>
            <person name="Entian K.-D."/>
            <person name="Terryn N."/>
            <person name="Harris B."/>
            <person name="Ansorge W."/>
            <person name="Brandt P."/>
            <person name="Grivell L.A."/>
            <person name="Rieger M."/>
            <person name="Weichselgartner M."/>
            <person name="de Simone V."/>
            <person name="Obermaier B."/>
            <person name="Mache R."/>
            <person name="Mueller M."/>
            <person name="Kreis M."/>
            <person name="Delseny M."/>
            <person name="Puigdomenech P."/>
            <person name="Watson M."/>
            <person name="Schmidtheini T."/>
            <person name="Reichert B."/>
            <person name="Portetelle D."/>
            <person name="Perez-Alonso M."/>
            <person name="Boutry M."/>
            <person name="Bancroft I."/>
            <person name="Vos P."/>
            <person name="Hoheisel J."/>
            <person name="Zimmermann W."/>
            <person name="Wedler H."/>
            <person name="Ridley P."/>
            <person name="Langham S.-A."/>
            <person name="McCullagh B."/>
            <person name="Bilham L."/>
            <person name="Robben J."/>
            <person name="van der Schueren J."/>
            <person name="Grymonprez B."/>
            <person name="Chuang Y.-J."/>
            <person name="Vandenbussche F."/>
            <person name="Braeken M."/>
            <person name="Weltjens I."/>
            <person name="Voet M."/>
            <person name="Bastiaens I."/>
            <person name="Aert R."/>
            <person name="Defoor E."/>
            <person name="Weitzenegger T."/>
            <person name="Bothe G."/>
            <person name="Ramsperger U."/>
            <person name="Hilbert H."/>
            <person name="Braun M."/>
            <person name="Holzer E."/>
            <person name="Brandt A."/>
            <person name="Peters S."/>
            <person name="van Staveren M."/>
            <person name="Dirkse W."/>
            <person name="Mooijman P."/>
            <person name="Klein Lankhorst R."/>
            <person name="Rose M."/>
            <person name="Hauf J."/>
            <person name="Koetter P."/>
            <person name="Berneiser S."/>
            <person name="Hempel S."/>
            <person name="Feldpausch M."/>
            <person name="Lamberth S."/>
            <person name="Van den Daele H."/>
            <person name="De Keyser A."/>
            <person name="Buysshaert C."/>
            <person name="Gielen J."/>
            <person name="Villarroel R."/>
            <person name="De Clercq R."/>
            <person name="van Montagu M."/>
            <person name="Rogers J."/>
            <person name="Cronin A."/>
            <person name="Quail M.A."/>
            <person name="Bray-Allen S."/>
            <person name="Clark L."/>
            <person name="Doggett J."/>
            <person name="Hall S."/>
            <person name="Kay M."/>
            <person name="Lennard N."/>
            <person name="McLay K."/>
            <person name="Mayes R."/>
            <person name="Pettett A."/>
            <person name="Rajandream M.A."/>
            <person name="Lyne M."/>
            <person name="Benes V."/>
            <person name="Rechmann S."/>
            <person name="Borkova D."/>
            <person name="Bloecker H."/>
            <person name="Scharfe M."/>
            <person name="Grimm M."/>
            <person name="Loehnert T.-H."/>
            <person name="Dose S."/>
            <person name="de Haan M."/>
            <person name="Maarse A.C."/>
            <person name="Schaefer M."/>
            <person name="Mueller-Auer S."/>
            <person name="Gabel C."/>
            <person name="Fuchs M."/>
            <person name="Fartmann B."/>
            <person name="Granderath K."/>
            <person name="Dauner D."/>
            <person name="Herzl A."/>
            <person name="Neumann S."/>
            <person name="Argiriou A."/>
            <person name="Vitale D."/>
            <person name="Liguori R."/>
            <person name="Piravandi E."/>
            <person name="Massenet O."/>
            <person name="Quigley F."/>
            <person name="Clabauld G."/>
            <person name="Muendlein A."/>
            <person name="Felber R."/>
            <person name="Schnabl S."/>
            <person name="Hiller R."/>
            <person name="Schmidt W."/>
            <person name="Lecharny A."/>
            <person name="Aubourg S."/>
            <person name="Chefdor F."/>
            <person name="Cooke R."/>
            <person name="Berger C."/>
            <person name="Monfort A."/>
            <person name="Casacuberta E."/>
            <person name="Gibbons T."/>
            <person name="Weber N."/>
            <person name="Vandenbol M."/>
            <person name="Bargues M."/>
            <person name="Terol J."/>
            <person name="Torres A."/>
            <person name="Perez-Perez A."/>
            <person name="Purnelle B."/>
            <person name="Bent E."/>
            <person name="Johnson S."/>
            <person name="Tacon D."/>
            <person name="Jesse T."/>
            <person name="Heijnen L."/>
            <person name="Schwarz S."/>
            <person name="Scholler P."/>
            <person name="Heber S."/>
            <person name="Francs P."/>
            <person name="Bielke C."/>
            <person name="Frishman D."/>
            <person name="Haase D."/>
            <person name="Lemcke K."/>
            <person name="Mewes H.-W."/>
            <person name="Stocker S."/>
            <person name="Zaccaria P."/>
            <person name="Bevan M."/>
            <person name="Wilson R.K."/>
            <person name="de la Bastide M."/>
            <person name="Habermann K."/>
            <person name="Parnell L."/>
            <person name="Dedhia N."/>
            <person name="Gnoj L."/>
            <person name="Schutz K."/>
            <person name="Huang E."/>
            <person name="Spiegel L."/>
            <person name="Sekhon M."/>
            <person name="Murray J."/>
            <person name="Sheet P."/>
            <person name="Cordes M."/>
            <person name="Abu-Threideh J."/>
            <person name="Stoneking T."/>
            <person name="Kalicki J."/>
            <person name="Graves T."/>
            <person name="Harmon G."/>
            <person name="Edwards J."/>
            <person name="Latreille P."/>
            <person name="Courtney L."/>
            <person name="Cloud J."/>
            <person name="Abbott A."/>
            <person name="Scott K."/>
            <person name="Johnson D."/>
            <person name="Minx P."/>
            <person name="Bentley D."/>
            <person name="Fulton B."/>
            <person name="Miller N."/>
            <person name="Greco T."/>
            <person name="Kemp K."/>
            <person name="Kramer J."/>
            <person name="Fulton L."/>
            <person name="Mardis E."/>
            <person name="Dante M."/>
            <person name="Pepin K."/>
            <person name="Hillier L.W."/>
            <person name="Nelson J."/>
            <person name="Spieth J."/>
            <person name="Ryan E."/>
            <person name="Andrews S."/>
            <person name="Geisel C."/>
            <person name="Layman D."/>
            <person name="Du H."/>
            <person name="Ali J."/>
            <person name="Berghoff A."/>
            <person name="Jones K."/>
            <person name="Drone K."/>
            <person name="Cotton M."/>
            <person name="Joshu C."/>
            <person name="Antonoiu B."/>
            <person name="Zidanic M."/>
            <person name="Strong C."/>
            <person name="Sun H."/>
            <person name="Lamar B."/>
            <person name="Yordan C."/>
            <person name="Ma P."/>
            <person name="Zhong J."/>
            <person name="Preston R."/>
            <person name="Vil D."/>
            <person name="Shekher M."/>
            <person name="Matero A."/>
            <person name="Shah R."/>
            <person name="Swaby I.K."/>
            <person name="O'Shaughnessy A."/>
            <person name="Rodriguez M."/>
            <person name="Hoffman J."/>
            <person name="Till S."/>
            <person name="Granat S."/>
            <person name="Shohdy N."/>
            <person name="Hasegawa A."/>
            <person name="Hameed A."/>
            <person name="Lodhi M."/>
            <person name="Johnson A."/>
            <person name="Chen E."/>
            <person name="Marra M.A."/>
            <person name="Martienssen R."/>
            <person name="McCombie W.R."/>
        </authorList>
    </citation>
    <scope>NUCLEOTIDE SEQUENCE [LARGE SCALE GENOMIC DNA]</scope>
    <source>
        <strain>cv. Columbia</strain>
    </source>
</reference>
<reference key="2">
    <citation type="journal article" date="2017" name="Plant J.">
        <title>Araport11: a complete reannotation of the Arabidopsis thaliana reference genome.</title>
        <authorList>
            <person name="Cheng C.Y."/>
            <person name="Krishnakumar V."/>
            <person name="Chan A.P."/>
            <person name="Thibaud-Nissen F."/>
            <person name="Schobel S."/>
            <person name="Town C.D."/>
        </authorList>
    </citation>
    <scope>GENOME REANNOTATION</scope>
    <source>
        <strain>cv. Columbia</strain>
    </source>
</reference>
<reference key="3">
    <citation type="journal article" date="2003" name="Science">
        <title>Empirical analysis of transcriptional activity in the Arabidopsis genome.</title>
        <authorList>
            <person name="Yamada K."/>
            <person name="Lim J."/>
            <person name="Dale J.M."/>
            <person name="Chen H."/>
            <person name="Shinn P."/>
            <person name="Palm C.J."/>
            <person name="Southwick A.M."/>
            <person name="Wu H.C."/>
            <person name="Kim C.J."/>
            <person name="Nguyen M."/>
            <person name="Pham P.K."/>
            <person name="Cheuk R.F."/>
            <person name="Karlin-Newmann G."/>
            <person name="Liu S.X."/>
            <person name="Lam B."/>
            <person name="Sakano H."/>
            <person name="Wu T."/>
            <person name="Yu G."/>
            <person name="Miranda M."/>
            <person name="Quach H.L."/>
            <person name="Tripp M."/>
            <person name="Chang C.H."/>
            <person name="Lee J.M."/>
            <person name="Toriumi M.J."/>
            <person name="Chan M.M."/>
            <person name="Tang C.C."/>
            <person name="Onodera C.S."/>
            <person name="Deng J.M."/>
            <person name="Akiyama K."/>
            <person name="Ansari Y."/>
            <person name="Arakawa T."/>
            <person name="Banh J."/>
            <person name="Banno F."/>
            <person name="Bowser L."/>
            <person name="Brooks S.Y."/>
            <person name="Carninci P."/>
            <person name="Chao Q."/>
            <person name="Choy N."/>
            <person name="Enju A."/>
            <person name="Goldsmith A.D."/>
            <person name="Gurjal M."/>
            <person name="Hansen N.F."/>
            <person name="Hayashizaki Y."/>
            <person name="Johnson-Hopson C."/>
            <person name="Hsuan V.W."/>
            <person name="Iida K."/>
            <person name="Karnes M."/>
            <person name="Khan S."/>
            <person name="Koesema E."/>
            <person name="Ishida J."/>
            <person name="Jiang P.X."/>
            <person name="Jones T."/>
            <person name="Kawai J."/>
            <person name="Kamiya A."/>
            <person name="Meyers C."/>
            <person name="Nakajima M."/>
            <person name="Narusaka M."/>
            <person name="Seki M."/>
            <person name="Sakurai T."/>
            <person name="Satou M."/>
            <person name="Tamse R."/>
            <person name="Vaysberg M."/>
            <person name="Wallender E.K."/>
            <person name="Wong C."/>
            <person name="Yamamura Y."/>
            <person name="Yuan S."/>
            <person name="Shinozaki K."/>
            <person name="Davis R.W."/>
            <person name="Theologis A."/>
            <person name="Ecker J.R."/>
        </authorList>
    </citation>
    <scope>NUCLEOTIDE SEQUENCE [LARGE SCALE MRNA]</scope>
    <source>
        <strain>cv. Columbia</strain>
    </source>
</reference>
<reference key="4">
    <citation type="journal article" date="2000" name="RNA">
        <title>RBP45 and RBP47, two oligouridylate-specific hnRNP-like proteins interacting with poly(A)+ RNA in nuclei of plant cells.</title>
        <authorList>
            <person name="Lorkovic Z.J."/>
            <person name="Wieczorek Kirk D.A."/>
            <person name="Klahre U."/>
            <person name="Hemmings-Mieszczak M."/>
            <person name="Filipowicz W."/>
        </authorList>
    </citation>
    <scope>TISSUE SPECIFICITY</scope>
    <scope>GENE FAMILY</scope>
    <scope>NOMENCLATURE</scope>
</reference>
<reference key="5">
    <citation type="journal article" date="2011" name="Mol. Cells">
        <title>Phylogenetic and expression analysis of RNA-binding proteins with triple RNA recognition motifs in plants.</title>
        <authorList>
            <person name="Peal L."/>
            <person name="Jambunathan N."/>
            <person name="Mahalingam R."/>
        </authorList>
    </citation>
    <scope>GENE FAMILY</scope>
    <source>
        <strain>cv. Columbia</strain>
        <strain>cv. Wassilewskija</strain>
    </source>
</reference>
<organism>
    <name type="scientific">Arabidopsis thaliana</name>
    <name type="common">Mouse-ear cress</name>
    <dbReference type="NCBI Taxonomy" id="3702"/>
    <lineage>
        <taxon>Eukaryota</taxon>
        <taxon>Viridiplantae</taxon>
        <taxon>Streptophyta</taxon>
        <taxon>Embryophyta</taxon>
        <taxon>Tracheophyta</taxon>
        <taxon>Spermatophyta</taxon>
        <taxon>Magnoliopsida</taxon>
        <taxon>eudicotyledons</taxon>
        <taxon>Gunneridae</taxon>
        <taxon>Pentapetalae</taxon>
        <taxon>rosids</taxon>
        <taxon>malvids</taxon>
        <taxon>Brassicales</taxon>
        <taxon>Brassicaceae</taxon>
        <taxon>Camelineae</taxon>
        <taxon>Arabidopsis</taxon>
    </lineage>
</organism>
<comment type="function">
    <text evidence="1">Heterogeneous nuclear ribonucleoprotein (hnRNP)-protein binding the poly(A) tail of mRNA and probably involved in some steps of pre-mRNA maturation.</text>
</comment>
<comment type="subunit">
    <text evidence="1">Interacts with the poly(A) tail of mRNA in nucleus.</text>
</comment>
<comment type="subcellular location">
    <subcellularLocation>
        <location evidence="1">Nucleus</location>
    </subcellularLocation>
</comment>
<comment type="tissue specificity">
    <text evidence="4">Mostly expressed in seedlings and stems, and, to a lower extent, in leaves and flowers.</text>
</comment>
<comment type="similarity">
    <text evidence="5">Belongs to the polyadenylate-binding RBP45 family.</text>
</comment>
<comment type="sequence caution" evidence="5">
    <conflict type="erroneous gene model prediction">
        <sequence resource="EMBL-CDS" id="CAB36546"/>
    </conflict>
</comment>
<comment type="sequence caution" evidence="5">
    <conflict type="erroneous gene model prediction">
        <sequence resource="EMBL-CDS" id="CAB79555"/>
    </conflict>
</comment>
<dbReference type="EMBL" id="AL035440">
    <property type="protein sequence ID" value="CAB36546.1"/>
    <property type="status" value="ALT_SEQ"/>
    <property type="molecule type" value="Genomic_DNA"/>
</dbReference>
<dbReference type="EMBL" id="AL161566">
    <property type="protein sequence ID" value="CAB79555.1"/>
    <property type="status" value="ALT_SEQ"/>
    <property type="molecule type" value="Genomic_DNA"/>
</dbReference>
<dbReference type="EMBL" id="CP002687">
    <property type="protein sequence ID" value="AEE85282.1"/>
    <property type="molecule type" value="Genomic_DNA"/>
</dbReference>
<dbReference type="EMBL" id="AF370339">
    <property type="protein sequence ID" value="AAK44154.1"/>
    <property type="molecule type" value="mRNA"/>
</dbReference>
<dbReference type="EMBL" id="AY054487">
    <property type="protein sequence ID" value="AAK96678.1"/>
    <property type="molecule type" value="mRNA"/>
</dbReference>
<dbReference type="EMBL" id="AY062999">
    <property type="protein sequence ID" value="AAL34173.1"/>
    <property type="molecule type" value="mRNA"/>
</dbReference>
<dbReference type="EMBL" id="AY093292">
    <property type="protein sequence ID" value="AAM13291.1"/>
    <property type="molecule type" value="mRNA"/>
</dbReference>
<dbReference type="PIR" id="T04823">
    <property type="entry name" value="T04823"/>
</dbReference>
<dbReference type="RefSeq" id="NP_567764.1">
    <property type="nucleotide sequence ID" value="NM_118834.4"/>
</dbReference>
<dbReference type="SMR" id="Q93W34"/>
<dbReference type="BioGRID" id="14095">
    <property type="interactions" value="3"/>
</dbReference>
<dbReference type="FunCoup" id="Q93W34">
    <property type="interactions" value="1622"/>
</dbReference>
<dbReference type="IntAct" id="Q93W34">
    <property type="interactions" value="3"/>
</dbReference>
<dbReference type="STRING" id="3702.Q93W34"/>
<dbReference type="iPTMnet" id="Q93W34"/>
<dbReference type="PaxDb" id="3702-AT4G27000.1"/>
<dbReference type="ProteomicsDB" id="226812"/>
<dbReference type="EnsemblPlants" id="AT4G27000.1">
    <property type="protein sequence ID" value="AT4G27000.1"/>
    <property type="gene ID" value="AT4G27000"/>
</dbReference>
<dbReference type="GeneID" id="828808"/>
<dbReference type="Gramene" id="AT4G27000.1">
    <property type="protein sequence ID" value="AT4G27000.1"/>
    <property type="gene ID" value="AT4G27000"/>
</dbReference>
<dbReference type="KEGG" id="ath:AT4G27000"/>
<dbReference type="Araport" id="AT4G27000"/>
<dbReference type="TAIR" id="AT4G27000">
    <property type="gene designation" value="ATRBP45C"/>
</dbReference>
<dbReference type="eggNOG" id="KOG0118">
    <property type="taxonomic scope" value="Eukaryota"/>
</dbReference>
<dbReference type="HOGENOM" id="CLU_016304_2_1_1"/>
<dbReference type="InParanoid" id="Q93W34"/>
<dbReference type="OMA" id="CAEQALG"/>
<dbReference type="CD-CODE" id="4299E36E">
    <property type="entry name" value="Nucleolus"/>
</dbReference>
<dbReference type="PRO" id="PR:Q93W34"/>
<dbReference type="Proteomes" id="UP000006548">
    <property type="component" value="Chromosome 4"/>
</dbReference>
<dbReference type="ExpressionAtlas" id="Q93W34">
    <property type="expression patterns" value="baseline and differential"/>
</dbReference>
<dbReference type="GO" id="GO:0005829">
    <property type="term" value="C:cytosol"/>
    <property type="evidence" value="ECO:0007005"/>
    <property type="project" value="TAIR"/>
</dbReference>
<dbReference type="GO" id="GO:0005634">
    <property type="term" value="C:nucleus"/>
    <property type="evidence" value="ECO:0000250"/>
    <property type="project" value="UniProtKB"/>
</dbReference>
<dbReference type="GO" id="GO:0003729">
    <property type="term" value="F:mRNA binding"/>
    <property type="evidence" value="ECO:0000314"/>
    <property type="project" value="TAIR"/>
</dbReference>
<dbReference type="GO" id="GO:0008143">
    <property type="term" value="F:poly(A) binding"/>
    <property type="evidence" value="ECO:0000250"/>
    <property type="project" value="UniProtKB"/>
</dbReference>
<dbReference type="GO" id="GO:0006397">
    <property type="term" value="P:mRNA processing"/>
    <property type="evidence" value="ECO:0007669"/>
    <property type="project" value="UniProtKB-KW"/>
</dbReference>
<dbReference type="CDD" id="cd12344">
    <property type="entry name" value="RRM1_SECp43_like"/>
    <property type="match status" value="1"/>
</dbReference>
<dbReference type="CDD" id="cd12345">
    <property type="entry name" value="RRM2_SECp43_like"/>
    <property type="match status" value="1"/>
</dbReference>
<dbReference type="FunFam" id="3.30.70.330:FF:000451">
    <property type="entry name" value="Polyadenylate-binding protein RBP45C"/>
    <property type="match status" value="1"/>
</dbReference>
<dbReference type="FunFam" id="3.30.70.330:FF:000103">
    <property type="entry name" value="Polyadenylate-binding protein RBP47B"/>
    <property type="match status" value="1"/>
</dbReference>
<dbReference type="FunFam" id="3.30.70.330:FF:000471">
    <property type="entry name" value="Polyadenylate-binding RBP45B-like protein"/>
    <property type="match status" value="1"/>
</dbReference>
<dbReference type="Gene3D" id="3.30.70.330">
    <property type="match status" value="3"/>
</dbReference>
<dbReference type="InterPro" id="IPR012677">
    <property type="entry name" value="Nucleotide-bd_a/b_plait_sf"/>
</dbReference>
<dbReference type="InterPro" id="IPR035979">
    <property type="entry name" value="RBD_domain_sf"/>
</dbReference>
<dbReference type="InterPro" id="IPR050825">
    <property type="entry name" value="RBM42_RBP45_47-like"/>
</dbReference>
<dbReference type="InterPro" id="IPR000504">
    <property type="entry name" value="RRM_dom"/>
</dbReference>
<dbReference type="PANTHER" id="PTHR47640:SF56">
    <property type="entry name" value="POLYADENYLATE-BINDING PROTEIN RBP45C"/>
    <property type="match status" value="1"/>
</dbReference>
<dbReference type="PANTHER" id="PTHR47640">
    <property type="entry name" value="TRNA SELENOCYSTEINE 1-ASSOCIATED PROTEIN 1-RELATED-RELATED"/>
    <property type="match status" value="1"/>
</dbReference>
<dbReference type="Pfam" id="PF00076">
    <property type="entry name" value="RRM_1"/>
    <property type="match status" value="3"/>
</dbReference>
<dbReference type="SMART" id="SM00360">
    <property type="entry name" value="RRM"/>
    <property type="match status" value="3"/>
</dbReference>
<dbReference type="SUPFAM" id="SSF54928">
    <property type="entry name" value="RNA-binding domain, RBD"/>
    <property type="match status" value="2"/>
</dbReference>
<dbReference type="PROSITE" id="PS50102">
    <property type="entry name" value="RRM"/>
    <property type="match status" value="3"/>
</dbReference>
<accession>Q93W34</accession>
<accession>Q9SZ39</accession>
<protein>
    <recommendedName>
        <fullName>Polyadenylate-binding protein RBP45C</fullName>
        <shortName>Poly(A)-binding protein RBP45C</shortName>
    </recommendedName>
    <alternativeName>
        <fullName>RNA-binding protein 45C</fullName>
        <shortName>AtRBP45C</shortName>
    </alternativeName>
</protein>
<proteinExistence type="evidence at transcript level"/>